<feature type="signal peptide" evidence="1">
    <location>
        <begin position="1"/>
        <end position="23"/>
    </location>
</feature>
<feature type="chain" id="PRO_0000247181" description="FAS1 domain-containing protein YLR001C">
    <location>
        <begin position="24"/>
        <end position="862"/>
    </location>
</feature>
<feature type="topological domain" description="Vacuolar" evidence="1">
    <location>
        <begin position="24"/>
        <end position="762"/>
    </location>
</feature>
<feature type="transmembrane region" description="Helical" evidence="1">
    <location>
        <begin position="763"/>
        <end position="783"/>
    </location>
</feature>
<feature type="topological domain" description="Cytoplasmic" evidence="1">
    <location>
        <begin position="784"/>
        <end position="862"/>
    </location>
</feature>
<feature type="domain" description="FAS1 1" evidence="2">
    <location>
        <begin position="34"/>
        <end position="162"/>
    </location>
</feature>
<feature type="domain" description="FAS1 2" evidence="2">
    <location>
        <begin position="463"/>
        <end position="604"/>
    </location>
</feature>
<feature type="domain" description="FAS1 3" evidence="2">
    <location>
        <begin position="606"/>
        <end position="744"/>
    </location>
</feature>
<feature type="glycosylation site" description="N-linked (GlcNAc...) asparagine" evidence="1">
    <location>
        <position position="68"/>
    </location>
</feature>
<feature type="glycosylation site" description="N-linked (GlcNAc...) asparagine" evidence="1">
    <location>
        <position position="112"/>
    </location>
</feature>
<feature type="glycosylation site" description="N-linked (GlcNAc...) asparagine" evidence="1">
    <location>
        <position position="152"/>
    </location>
</feature>
<feature type="glycosylation site" description="N-linked (GlcNAc...) asparagine" evidence="1">
    <location>
        <position position="200"/>
    </location>
</feature>
<feature type="glycosylation site" description="N-linked (GlcNAc...) asparagine" evidence="1">
    <location>
        <position position="291"/>
    </location>
</feature>
<feature type="glycosylation site" description="N-linked (GlcNAc...) asparagine" evidence="1">
    <location>
        <position position="333"/>
    </location>
</feature>
<feature type="glycosylation site" description="N-linked (GlcNAc...) asparagine" evidence="1">
    <location>
        <position position="450"/>
    </location>
</feature>
<feature type="glycosylation site" description="N-linked (GlcNAc...) asparagine" evidence="1">
    <location>
        <position position="521"/>
    </location>
</feature>
<feature type="glycosylation site" description="N-linked (GlcNAc...) asparagine" evidence="1">
    <location>
        <position position="542"/>
    </location>
</feature>
<feature type="glycosylation site" description="N-linked (GlcNAc...) asparagine" evidence="1">
    <location>
        <position position="569"/>
    </location>
</feature>
<feature type="glycosylation site" description="N-linked (GlcNAc...) asparagine" evidence="1">
    <location>
        <position position="663"/>
    </location>
</feature>
<feature type="glycosylation site" description="N-linked (GlcNAc...) asparagine" evidence="1">
    <location>
        <position position="679"/>
    </location>
</feature>
<feature type="glycosylation site" description="N-linked (GlcNAc...) asparagine" evidence="1">
    <location>
        <position position="688"/>
    </location>
</feature>
<reference key="1">
    <citation type="journal article" date="1996" name="Yeast">
        <title>Sequence analysis of the CEN12 region of Saccharomyces cerevisiae on a 43.7 kb fragment of chromosome XII including an open reading frame homologous to the human cystic fibrosis transmembrane conductance regulator protein CFTR.</title>
        <authorList>
            <person name="Miosga T."/>
            <person name="Zimmermann F.K."/>
        </authorList>
    </citation>
    <scope>NUCLEOTIDE SEQUENCE [GENOMIC DNA]</scope>
    <source>
        <strain>ATCC 90840 / EAY235 / FY23</strain>
    </source>
</reference>
<reference key="2">
    <citation type="journal article" date="1997" name="Nature">
        <title>The nucleotide sequence of Saccharomyces cerevisiae chromosome XII.</title>
        <authorList>
            <person name="Johnston M."/>
            <person name="Hillier L.W."/>
            <person name="Riles L."/>
            <person name="Albermann K."/>
            <person name="Andre B."/>
            <person name="Ansorge W."/>
            <person name="Benes V."/>
            <person name="Brueckner M."/>
            <person name="Delius H."/>
            <person name="Dubois E."/>
            <person name="Duesterhoeft A."/>
            <person name="Entian K.-D."/>
            <person name="Floeth M."/>
            <person name="Goffeau A."/>
            <person name="Hebling U."/>
            <person name="Heumann K."/>
            <person name="Heuss-Neitzel D."/>
            <person name="Hilbert H."/>
            <person name="Hilger F."/>
            <person name="Kleine K."/>
            <person name="Koetter P."/>
            <person name="Louis E.J."/>
            <person name="Messenguy F."/>
            <person name="Mewes H.-W."/>
            <person name="Miosga T."/>
            <person name="Moestl D."/>
            <person name="Mueller-Auer S."/>
            <person name="Nentwich U."/>
            <person name="Obermaier B."/>
            <person name="Piravandi E."/>
            <person name="Pohl T.M."/>
            <person name="Portetelle D."/>
            <person name="Purnelle B."/>
            <person name="Rechmann S."/>
            <person name="Rieger M."/>
            <person name="Rinke M."/>
            <person name="Rose M."/>
            <person name="Scharfe M."/>
            <person name="Scherens B."/>
            <person name="Scholler P."/>
            <person name="Schwager C."/>
            <person name="Schwarz S."/>
            <person name="Underwood A.P."/>
            <person name="Urrestarazu L.A."/>
            <person name="Vandenbol M."/>
            <person name="Verhasselt P."/>
            <person name="Vierendeels F."/>
            <person name="Voet M."/>
            <person name="Volckaert G."/>
            <person name="Voss H."/>
            <person name="Wambutt R."/>
            <person name="Wedler E."/>
            <person name="Wedler H."/>
            <person name="Zimmermann F.K."/>
            <person name="Zollner A."/>
            <person name="Hani J."/>
            <person name="Hoheisel J.D."/>
        </authorList>
    </citation>
    <scope>NUCLEOTIDE SEQUENCE [LARGE SCALE GENOMIC DNA]</scope>
    <source>
        <strain>ATCC 204508 / S288c</strain>
    </source>
</reference>
<reference key="3">
    <citation type="journal article" date="2014" name="G3 (Bethesda)">
        <title>The reference genome sequence of Saccharomyces cerevisiae: Then and now.</title>
        <authorList>
            <person name="Engel S.R."/>
            <person name="Dietrich F.S."/>
            <person name="Fisk D.G."/>
            <person name="Binkley G."/>
            <person name="Balakrishnan R."/>
            <person name="Costanzo M.C."/>
            <person name="Dwight S.S."/>
            <person name="Hitz B.C."/>
            <person name="Karra K."/>
            <person name="Nash R.S."/>
            <person name="Weng S."/>
            <person name="Wong E.D."/>
            <person name="Lloyd P."/>
            <person name="Skrzypek M.S."/>
            <person name="Miyasato S.R."/>
            <person name="Simison M."/>
            <person name="Cherry J.M."/>
        </authorList>
    </citation>
    <scope>GENOME REANNOTATION</scope>
    <source>
        <strain>ATCC 204508 / S288c</strain>
    </source>
</reference>
<reference key="4">
    <citation type="journal article" date="2003" name="Nature">
        <title>Global analysis of protein localization in budding yeast.</title>
        <authorList>
            <person name="Huh W.-K."/>
            <person name="Falvo J.V."/>
            <person name="Gerke L.C."/>
            <person name="Carroll A.S."/>
            <person name="Howson R.W."/>
            <person name="Weissman J.S."/>
            <person name="O'Shea E.K."/>
        </authorList>
    </citation>
    <scope>SUBCELLULAR LOCATION [LARGE SCALE ANALYSIS]</scope>
</reference>
<reference key="5">
    <citation type="journal article" date="2003" name="Nature">
        <title>Global analysis of protein expression in yeast.</title>
        <authorList>
            <person name="Ghaemmaghami S."/>
            <person name="Huh W.-K."/>
            <person name="Bower K."/>
            <person name="Howson R.W."/>
            <person name="Belle A."/>
            <person name="Dephoure N."/>
            <person name="O'Shea E.K."/>
            <person name="Weissman J.S."/>
        </authorList>
    </citation>
    <scope>LEVEL OF PROTEIN EXPRESSION [LARGE SCALE ANALYSIS]</scope>
</reference>
<name>YL001_YEAST</name>
<sequence>MNMAIQTIKYIFWLLPILGLTQALLQNPGDDFPFSTVIDILSENVEFSTFLRIIQKTGHVQYLNELQNFTLFAPINSAFIKGDQTTDQFEEHFHIEDFLIHDRVLQVRDLENGTYLEKRAAKAPLLLRKHERHCFVNEIAVVEPDLLPSFQNASLQGINNLLLIQPQINELLVQLDEETQDLKIFSDFISSFSNYNAYTNSSTVLVPLDVNFRKFFNTIEINYLLDKYNKLGKSNTISQAKWAADRTSLLQELIIDDVYGGILPKELILENKNNRKLFMKSNSEGTSVSVNNSDYSPISNRIFEIGVVHGFSDLDFLRTHIQFDAEKYLHGLNCSEFVKELYFRDLEKFIQNGRKITIFVPQASFNEDRGYTKPSLLYHFVEGKIDLEQDFSSLRPIQYAPTQIYDSAFCSSAKRLGGHCQKFKITRSNKGYYINGRFKILNTKPYEIGNTSIYSIDDDLQLPGDLVLSLAPENHCSISLMLLKELNLLDLPSNHKGYTILLPCMNSWDNNDLTIDYLRSNKTALNLLMRNLIFEDLIYSNNYSISTTVKNLYGNSVSIGVQKIVGSQNLTKISVSTIKESIIIEESSDIFFNQGVIHPIDQLDFPVDLEISLKELIETTGTKEIFDFFNLFYDLSSIIWNNEEYSLLVPTASSIPLSGITANSTNLRKFLELHLIPANVTQNLLDCNGSISTKLGTKLNCRKDHLDNVFVSIQGDWTKEVRVLKTGCTTNLKSSCIFLIDKPISLSWLNSEKYHLRLPGIAVGFGVIIGVTIAISLLFCIIITRGGKVKDKNQRGRNDRATTPLIQHSPIIHNPSYSATAHLSPLSQPTFEGSYSVNAIQTPRDIRRVGSDQKGGRSVSTS</sequence>
<comment type="subcellular location">
    <subcellularLocation>
        <location evidence="4">Vacuole membrane</location>
        <topology evidence="4">Single-pass type I membrane protein</topology>
    </subcellularLocation>
</comment>
<comment type="miscellaneous">
    <text evidence="3">Present with 206 molecules/cell in log phase SD medium.</text>
</comment>
<organism>
    <name type="scientific">Saccharomyces cerevisiae (strain ATCC 204508 / S288c)</name>
    <name type="common">Baker's yeast</name>
    <dbReference type="NCBI Taxonomy" id="559292"/>
    <lineage>
        <taxon>Eukaryota</taxon>
        <taxon>Fungi</taxon>
        <taxon>Dikarya</taxon>
        <taxon>Ascomycota</taxon>
        <taxon>Saccharomycotina</taxon>
        <taxon>Saccharomycetes</taxon>
        <taxon>Saccharomycetales</taxon>
        <taxon>Saccharomycetaceae</taxon>
        <taxon>Saccharomyces</taxon>
    </lineage>
</organism>
<proteinExistence type="evidence at protein level"/>
<keyword id="KW-0325">Glycoprotein</keyword>
<keyword id="KW-0472">Membrane</keyword>
<keyword id="KW-1185">Reference proteome</keyword>
<keyword id="KW-0677">Repeat</keyword>
<keyword id="KW-0732">Signal</keyword>
<keyword id="KW-0812">Transmembrane</keyword>
<keyword id="KW-1133">Transmembrane helix</keyword>
<keyword id="KW-0926">Vacuole</keyword>
<dbReference type="EMBL" id="X91488">
    <property type="protein sequence ID" value="CAA62770.1"/>
    <property type="molecule type" value="Genomic_DNA"/>
</dbReference>
<dbReference type="EMBL" id="Z73173">
    <property type="protein sequence ID" value="CAA97523.1"/>
    <property type="molecule type" value="Genomic_DNA"/>
</dbReference>
<dbReference type="EMBL" id="BK006945">
    <property type="protein sequence ID" value="DAA09319.1"/>
    <property type="molecule type" value="Genomic_DNA"/>
</dbReference>
<dbReference type="PIR" id="S64821">
    <property type="entry name" value="S64821"/>
</dbReference>
<dbReference type="RefSeq" id="NP_013101.1">
    <property type="nucleotide sequence ID" value="NM_001181888.1"/>
</dbReference>
<dbReference type="SMR" id="Q07895"/>
<dbReference type="BioGRID" id="31274">
    <property type="interactions" value="27"/>
</dbReference>
<dbReference type="DIP" id="DIP-4383N"/>
<dbReference type="FunCoup" id="Q07895">
    <property type="interactions" value="40"/>
</dbReference>
<dbReference type="IntAct" id="Q07895">
    <property type="interactions" value="3"/>
</dbReference>
<dbReference type="MINT" id="Q07895"/>
<dbReference type="STRING" id="4932.YLR001C"/>
<dbReference type="GlyGen" id="Q07895">
    <property type="glycosylation" value="13 sites"/>
</dbReference>
<dbReference type="iPTMnet" id="Q07895"/>
<dbReference type="SwissPalm" id="Q07895"/>
<dbReference type="PaxDb" id="4932-YLR001C"/>
<dbReference type="PeptideAtlas" id="Q07895"/>
<dbReference type="EnsemblFungi" id="YLR001C_mRNA">
    <property type="protein sequence ID" value="YLR001C"/>
    <property type="gene ID" value="YLR001C"/>
</dbReference>
<dbReference type="GeneID" id="850687"/>
<dbReference type="KEGG" id="sce:YLR001C"/>
<dbReference type="AGR" id="SGD:S000003991"/>
<dbReference type="SGD" id="S000003991">
    <property type="gene designation" value="YLR001C"/>
</dbReference>
<dbReference type="VEuPathDB" id="FungiDB:YLR001C"/>
<dbReference type="eggNOG" id="KOG1437">
    <property type="taxonomic scope" value="Eukaryota"/>
</dbReference>
<dbReference type="GeneTree" id="ENSGT00530000063860"/>
<dbReference type="HOGENOM" id="CLU_008441_0_0_1"/>
<dbReference type="InParanoid" id="Q07895"/>
<dbReference type="OMA" id="FCSSNKR"/>
<dbReference type="OrthoDB" id="286301at2759"/>
<dbReference type="BioCyc" id="YEAST:G3O-32162-MONOMER"/>
<dbReference type="BioGRID-ORCS" id="850687">
    <property type="hits" value="0 hits in 10 CRISPR screens"/>
</dbReference>
<dbReference type="PRO" id="PR:Q07895"/>
<dbReference type="Proteomes" id="UP000002311">
    <property type="component" value="Chromosome XII"/>
</dbReference>
<dbReference type="RNAct" id="Q07895">
    <property type="molecule type" value="protein"/>
</dbReference>
<dbReference type="GO" id="GO:0005615">
    <property type="term" value="C:extracellular space"/>
    <property type="evidence" value="ECO:0000318"/>
    <property type="project" value="GO_Central"/>
</dbReference>
<dbReference type="GO" id="GO:0000324">
    <property type="term" value="C:fungal-type vacuole"/>
    <property type="evidence" value="ECO:0007005"/>
    <property type="project" value="SGD"/>
</dbReference>
<dbReference type="GO" id="GO:0000329">
    <property type="term" value="C:fungal-type vacuole membrane"/>
    <property type="evidence" value="ECO:0007005"/>
    <property type="project" value="SGD"/>
</dbReference>
<dbReference type="GO" id="GO:0005739">
    <property type="term" value="C:mitochondrion"/>
    <property type="evidence" value="ECO:0007005"/>
    <property type="project" value="SGD"/>
</dbReference>
<dbReference type="Gene3D" id="2.30.180.10">
    <property type="entry name" value="FAS1 domain"/>
    <property type="match status" value="2"/>
</dbReference>
<dbReference type="InterPro" id="IPR050904">
    <property type="entry name" value="Adhesion/Biosynth-related"/>
</dbReference>
<dbReference type="InterPro" id="IPR036378">
    <property type="entry name" value="FAS1_dom_sf"/>
</dbReference>
<dbReference type="InterPro" id="IPR000782">
    <property type="entry name" value="FAS1_domain"/>
</dbReference>
<dbReference type="PANTHER" id="PTHR10900:SF125">
    <property type="entry name" value="FAS1 DOMAIN-CONTAINING PROTEIN YLR001C"/>
    <property type="match status" value="1"/>
</dbReference>
<dbReference type="PANTHER" id="PTHR10900">
    <property type="entry name" value="PERIOSTIN-RELATED"/>
    <property type="match status" value="1"/>
</dbReference>
<dbReference type="Pfam" id="PF02469">
    <property type="entry name" value="Fasciclin"/>
    <property type="match status" value="2"/>
</dbReference>
<dbReference type="SUPFAM" id="SSF82153">
    <property type="entry name" value="FAS1 domain"/>
    <property type="match status" value="4"/>
</dbReference>
<dbReference type="PROSITE" id="PS50213">
    <property type="entry name" value="FAS1"/>
    <property type="match status" value="3"/>
</dbReference>
<accession>Q07895</accession>
<accession>D6VY03</accession>
<gene>
    <name type="ordered locus">YLR001C</name>
    <name type="ORF">L1388</name>
</gene>
<evidence type="ECO:0000255" key="1"/>
<evidence type="ECO:0000255" key="2">
    <source>
        <dbReference type="PROSITE-ProRule" id="PRU00082"/>
    </source>
</evidence>
<evidence type="ECO:0000269" key="3">
    <source>
    </source>
</evidence>
<evidence type="ECO:0000305" key="4"/>
<protein>
    <recommendedName>
        <fullName>FAS1 domain-containing protein YLR001C</fullName>
    </recommendedName>
</protein>